<dbReference type="EC" id="3.1.26.3" evidence="2"/>
<dbReference type="EMBL" id="CP000046">
    <property type="protein sequence ID" value="AAW38082.1"/>
    <property type="molecule type" value="Genomic_DNA"/>
</dbReference>
<dbReference type="RefSeq" id="WP_000043237.1">
    <property type="nucleotide sequence ID" value="NZ_JBGOFO010000002.1"/>
</dbReference>
<dbReference type="SMR" id="Q5HGJ9"/>
<dbReference type="KEGG" id="sac:SACOL1248"/>
<dbReference type="HOGENOM" id="CLU_000907_1_3_9"/>
<dbReference type="Proteomes" id="UP000000530">
    <property type="component" value="Chromosome"/>
</dbReference>
<dbReference type="GO" id="GO:0005737">
    <property type="term" value="C:cytoplasm"/>
    <property type="evidence" value="ECO:0007669"/>
    <property type="project" value="UniProtKB-SubCell"/>
</dbReference>
<dbReference type="GO" id="GO:0003725">
    <property type="term" value="F:double-stranded RNA binding"/>
    <property type="evidence" value="ECO:0007669"/>
    <property type="project" value="TreeGrafter"/>
</dbReference>
<dbReference type="GO" id="GO:0046872">
    <property type="term" value="F:metal ion binding"/>
    <property type="evidence" value="ECO:0007669"/>
    <property type="project" value="UniProtKB-KW"/>
</dbReference>
<dbReference type="GO" id="GO:0004525">
    <property type="term" value="F:ribonuclease III activity"/>
    <property type="evidence" value="ECO:0007669"/>
    <property type="project" value="UniProtKB-UniRule"/>
</dbReference>
<dbReference type="GO" id="GO:0019843">
    <property type="term" value="F:rRNA binding"/>
    <property type="evidence" value="ECO:0007669"/>
    <property type="project" value="UniProtKB-KW"/>
</dbReference>
<dbReference type="GO" id="GO:0006397">
    <property type="term" value="P:mRNA processing"/>
    <property type="evidence" value="ECO:0007669"/>
    <property type="project" value="UniProtKB-UniRule"/>
</dbReference>
<dbReference type="GO" id="GO:0010468">
    <property type="term" value="P:regulation of gene expression"/>
    <property type="evidence" value="ECO:0007669"/>
    <property type="project" value="TreeGrafter"/>
</dbReference>
<dbReference type="GO" id="GO:0006364">
    <property type="term" value="P:rRNA processing"/>
    <property type="evidence" value="ECO:0007669"/>
    <property type="project" value="UniProtKB-UniRule"/>
</dbReference>
<dbReference type="GO" id="GO:0008033">
    <property type="term" value="P:tRNA processing"/>
    <property type="evidence" value="ECO:0007669"/>
    <property type="project" value="UniProtKB-KW"/>
</dbReference>
<dbReference type="CDD" id="cd10845">
    <property type="entry name" value="DSRM_RNAse_III_family"/>
    <property type="match status" value="1"/>
</dbReference>
<dbReference type="CDD" id="cd00593">
    <property type="entry name" value="RIBOc"/>
    <property type="match status" value="1"/>
</dbReference>
<dbReference type="FunFam" id="1.10.1520.10:FF:000001">
    <property type="entry name" value="Ribonuclease 3"/>
    <property type="match status" value="1"/>
</dbReference>
<dbReference type="FunFam" id="3.30.160.20:FF:000003">
    <property type="entry name" value="Ribonuclease 3"/>
    <property type="match status" value="1"/>
</dbReference>
<dbReference type="Gene3D" id="3.30.160.20">
    <property type="match status" value="1"/>
</dbReference>
<dbReference type="Gene3D" id="1.10.1520.10">
    <property type="entry name" value="Ribonuclease III domain"/>
    <property type="match status" value="1"/>
</dbReference>
<dbReference type="HAMAP" id="MF_00104">
    <property type="entry name" value="RNase_III"/>
    <property type="match status" value="1"/>
</dbReference>
<dbReference type="InterPro" id="IPR014720">
    <property type="entry name" value="dsRBD_dom"/>
</dbReference>
<dbReference type="InterPro" id="IPR011907">
    <property type="entry name" value="RNase_III"/>
</dbReference>
<dbReference type="InterPro" id="IPR000999">
    <property type="entry name" value="RNase_III_dom"/>
</dbReference>
<dbReference type="InterPro" id="IPR036389">
    <property type="entry name" value="RNase_III_sf"/>
</dbReference>
<dbReference type="NCBIfam" id="TIGR02191">
    <property type="entry name" value="RNaseIII"/>
    <property type="match status" value="1"/>
</dbReference>
<dbReference type="PANTHER" id="PTHR11207:SF0">
    <property type="entry name" value="RIBONUCLEASE 3"/>
    <property type="match status" value="1"/>
</dbReference>
<dbReference type="PANTHER" id="PTHR11207">
    <property type="entry name" value="RIBONUCLEASE III"/>
    <property type="match status" value="1"/>
</dbReference>
<dbReference type="Pfam" id="PF00035">
    <property type="entry name" value="dsrm"/>
    <property type="match status" value="1"/>
</dbReference>
<dbReference type="Pfam" id="PF14622">
    <property type="entry name" value="Ribonucleas_3_3"/>
    <property type="match status" value="1"/>
</dbReference>
<dbReference type="SMART" id="SM00358">
    <property type="entry name" value="DSRM"/>
    <property type="match status" value="1"/>
</dbReference>
<dbReference type="SMART" id="SM00535">
    <property type="entry name" value="RIBOc"/>
    <property type="match status" value="1"/>
</dbReference>
<dbReference type="SUPFAM" id="SSF54768">
    <property type="entry name" value="dsRNA-binding domain-like"/>
    <property type="match status" value="1"/>
</dbReference>
<dbReference type="SUPFAM" id="SSF69065">
    <property type="entry name" value="RNase III domain-like"/>
    <property type="match status" value="1"/>
</dbReference>
<dbReference type="PROSITE" id="PS50137">
    <property type="entry name" value="DS_RBD"/>
    <property type="match status" value="1"/>
</dbReference>
<dbReference type="PROSITE" id="PS00517">
    <property type="entry name" value="RNASE_3_1"/>
    <property type="match status" value="1"/>
</dbReference>
<dbReference type="PROSITE" id="PS50142">
    <property type="entry name" value="RNASE_3_2"/>
    <property type="match status" value="1"/>
</dbReference>
<proteinExistence type="inferred from homology"/>
<evidence type="ECO:0000250" key="1"/>
<evidence type="ECO:0000255" key="2">
    <source>
        <dbReference type="HAMAP-Rule" id="MF_00104"/>
    </source>
</evidence>
<evidence type="ECO:0000256" key="3">
    <source>
        <dbReference type="SAM" id="MobiDB-lite"/>
    </source>
</evidence>
<evidence type="ECO:0000269" key="4">
    <source>
    </source>
</evidence>
<protein>
    <recommendedName>
        <fullName evidence="2">Ribonuclease 3</fullName>
        <ecNumber evidence="2">3.1.26.3</ecNumber>
    </recommendedName>
    <alternativeName>
        <fullName evidence="2">Ribonuclease III</fullName>
        <shortName evidence="2">RNase III</shortName>
    </alternativeName>
</protein>
<comment type="function">
    <text evidence="1 4">Digests double-stranded RNA. Involved in the processing of primary rRNA transcript to yield the immediate precursors to the large and small rRNAs (23S and 16S). Also processes some mRNAs, and tRNAs when they are encoded in the rRNA operon (By similarity). Complements pre-crRNA and tracrRNA coprocessing defects in an rnc deletion in S.pyogenes strain 370, although this S.aureus strain does not have the corresponding CRISPR locus (PubMed:24270795).</text>
</comment>
<comment type="catalytic activity">
    <reaction evidence="2">
        <text>Endonucleolytic cleavage to 5'-phosphomonoester.</text>
        <dbReference type="EC" id="3.1.26.3"/>
    </reaction>
</comment>
<comment type="cofactor">
    <cofactor evidence="2">
        <name>Mg(2+)</name>
        <dbReference type="ChEBI" id="CHEBI:18420"/>
    </cofactor>
</comment>
<comment type="subunit">
    <text evidence="2">Homodimer.</text>
</comment>
<comment type="subcellular location">
    <subcellularLocation>
        <location evidence="2">Cytoplasm</location>
    </subcellularLocation>
</comment>
<comment type="similarity">
    <text evidence="2">Belongs to the ribonuclease III family.</text>
</comment>
<accession>Q5HGJ9</accession>
<organism>
    <name type="scientific">Staphylococcus aureus (strain COL)</name>
    <dbReference type="NCBI Taxonomy" id="93062"/>
    <lineage>
        <taxon>Bacteria</taxon>
        <taxon>Bacillati</taxon>
        <taxon>Bacillota</taxon>
        <taxon>Bacilli</taxon>
        <taxon>Bacillales</taxon>
        <taxon>Staphylococcaceae</taxon>
        <taxon>Staphylococcus</taxon>
    </lineage>
</organism>
<gene>
    <name evidence="2" type="primary">rnc</name>
    <name type="ordered locus">SACOL1248</name>
</gene>
<sequence>MSKQKKSEIVNRFRKRFDTKMTELGFTYQNIDLYQQAFSHSSFINDFNMNRLDHNERLEFLGDAVLELTVSRYLFDKHPNLPEGNLTKMRATIVCEPSLVIFANKIGLNEMILLGKGEEKTGGRTRPSLISDAFEAFIGALYLDQGLDIVWKFAEKVIFPHVEQNELLGVVDFKTQFQEYVHQQNKGDVTYNLIKEEGPAHHRLFTSEVILQGEAIAEGKGKTKKESEQRAAESAYKQLKQIK</sequence>
<feature type="chain" id="PRO_0000180432" description="Ribonuclease 3">
    <location>
        <begin position="1"/>
        <end position="243"/>
    </location>
</feature>
<feature type="domain" description="RNase III" evidence="2">
    <location>
        <begin position="10"/>
        <end position="146"/>
    </location>
</feature>
<feature type="domain" description="DRBM" evidence="2">
    <location>
        <begin position="172"/>
        <end position="241"/>
    </location>
</feature>
<feature type="region of interest" description="Disordered" evidence="3">
    <location>
        <begin position="219"/>
        <end position="243"/>
    </location>
</feature>
<feature type="compositionally biased region" description="Basic and acidic residues" evidence="3">
    <location>
        <begin position="219"/>
        <end position="231"/>
    </location>
</feature>
<feature type="active site" evidence="2">
    <location>
        <position position="63"/>
    </location>
</feature>
<feature type="active site" evidence="2">
    <location>
        <position position="135"/>
    </location>
</feature>
<feature type="binding site" evidence="2">
    <location>
        <position position="59"/>
    </location>
    <ligand>
        <name>Mg(2+)</name>
        <dbReference type="ChEBI" id="CHEBI:18420"/>
    </ligand>
</feature>
<feature type="binding site" evidence="2">
    <location>
        <position position="132"/>
    </location>
    <ligand>
        <name>Mg(2+)</name>
        <dbReference type="ChEBI" id="CHEBI:18420"/>
    </ligand>
</feature>
<feature type="binding site" evidence="2">
    <location>
        <position position="135"/>
    </location>
    <ligand>
        <name>Mg(2+)</name>
        <dbReference type="ChEBI" id="CHEBI:18420"/>
    </ligand>
</feature>
<keyword id="KW-0963">Cytoplasm</keyword>
<keyword id="KW-0255">Endonuclease</keyword>
<keyword id="KW-0378">Hydrolase</keyword>
<keyword id="KW-0460">Magnesium</keyword>
<keyword id="KW-0479">Metal-binding</keyword>
<keyword id="KW-0507">mRNA processing</keyword>
<keyword id="KW-0540">Nuclease</keyword>
<keyword id="KW-0694">RNA-binding</keyword>
<keyword id="KW-0698">rRNA processing</keyword>
<keyword id="KW-0699">rRNA-binding</keyword>
<keyword id="KW-0819">tRNA processing</keyword>
<reference key="1">
    <citation type="journal article" date="2005" name="J. Bacteriol.">
        <title>Insights on evolution of virulence and resistance from the complete genome analysis of an early methicillin-resistant Staphylococcus aureus strain and a biofilm-producing methicillin-resistant Staphylococcus epidermidis strain.</title>
        <authorList>
            <person name="Gill S.R."/>
            <person name="Fouts D.E."/>
            <person name="Archer G.L."/>
            <person name="Mongodin E.F."/>
            <person name="DeBoy R.T."/>
            <person name="Ravel J."/>
            <person name="Paulsen I.T."/>
            <person name="Kolonay J.F."/>
            <person name="Brinkac L.M."/>
            <person name="Beanan M.J."/>
            <person name="Dodson R.J."/>
            <person name="Daugherty S.C."/>
            <person name="Madupu R."/>
            <person name="Angiuoli S.V."/>
            <person name="Durkin A.S."/>
            <person name="Haft D.H."/>
            <person name="Vamathevan J.J."/>
            <person name="Khouri H."/>
            <person name="Utterback T.R."/>
            <person name="Lee C."/>
            <person name="Dimitrov G."/>
            <person name="Jiang L."/>
            <person name="Qin H."/>
            <person name="Weidman J."/>
            <person name="Tran K."/>
            <person name="Kang K.H."/>
            <person name="Hance I.R."/>
            <person name="Nelson K.E."/>
            <person name="Fraser C.M."/>
        </authorList>
    </citation>
    <scope>NUCLEOTIDE SEQUENCE [LARGE SCALE GENOMIC DNA]</scope>
    <source>
        <strain>COL</strain>
    </source>
</reference>
<reference key="2">
    <citation type="journal article" date="2014" name="Nucleic Acids Res.">
        <title>Phylogeny of Cas9 determines functional exchangeability of dual-RNA and Cas9 among orthologous type II CRISPR-Cas systems.</title>
        <authorList>
            <person name="Fonfara I."/>
            <person name="Le Rhun A."/>
            <person name="Chylinski K."/>
            <person name="Makarova K.S."/>
            <person name="Lecrivain A.L."/>
            <person name="Bzdrenga J."/>
            <person name="Koonin E.V."/>
            <person name="Charpentier E."/>
        </authorList>
    </citation>
    <scope>FUNCTION</scope>
</reference>
<name>RNC_STAAC</name>